<organism>
    <name type="scientific">Synechococcus sp. (strain CC9311)</name>
    <dbReference type="NCBI Taxonomy" id="64471"/>
    <lineage>
        <taxon>Bacteria</taxon>
        <taxon>Bacillati</taxon>
        <taxon>Cyanobacteriota</taxon>
        <taxon>Cyanophyceae</taxon>
        <taxon>Synechococcales</taxon>
        <taxon>Synechococcaceae</taxon>
        <taxon>Synechococcus</taxon>
    </lineage>
</organism>
<feature type="chain" id="PRO_1000055737" description="Large ribosomal subunit protein uL14">
    <location>
        <begin position="1"/>
        <end position="121"/>
    </location>
</feature>
<gene>
    <name evidence="1" type="primary">rplN</name>
    <name evidence="1" type="synonym">rpl14</name>
    <name type="ordered locus">sync_0427</name>
</gene>
<accession>Q0ID15</accession>
<protein>
    <recommendedName>
        <fullName evidence="1">Large ribosomal subunit protein uL14</fullName>
    </recommendedName>
    <alternativeName>
        <fullName evidence="2">50S ribosomal protein L14</fullName>
    </alternativeName>
</protein>
<dbReference type="EMBL" id="CP000435">
    <property type="protein sequence ID" value="ABI47567.1"/>
    <property type="molecule type" value="Genomic_DNA"/>
</dbReference>
<dbReference type="RefSeq" id="WP_006854818.1">
    <property type="nucleotide sequence ID" value="NC_008319.1"/>
</dbReference>
<dbReference type="SMR" id="Q0ID15"/>
<dbReference type="STRING" id="64471.sync_0427"/>
<dbReference type="KEGG" id="syg:sync_0427"/>
<dbReference type="eggNOG" id="COG0093">
    <property type="taxonomic scope" value="Bacteria"/>
</dbReference>
<dbReference type="HOGENOM" id="CLU_095071_2_1_3"/>
<dbReference type="OrthoDB" id="9806379at2"/>
<dbReference type="Proteomes" id="UP000001961">
    <property type="component" value="Chromosome"/>
</dbReference>
<dbReference type="GO" id="GO:0022625">
    <property type="term" value="C:cytosolic large ribosomal subunit"/>
    <property type="evidence" value="ECO:0007669"/>
    <property type="project" value="TreeGrafter"/>
</dbReference>
<dbReference type="GO" id="GO:0070180">
    <property type="term" value="F:large ribosomal subunit rRNA binding"/>
    <property type="evidence" value="ECO:0007669"/>
    <property type="project" value="TreeGrafter"/>
</dbReference>
<dbReference type="GO" id="GO:0003735">
    <property type="term" value="F:structural constituent of ribosome"/>
    <property type="evidence" value="ECO:0007669"/>
    <property type="project" value="InterPro"/>
</dbReference>
<dbReference type="GO" id="GO:0006412">
    <property type="term" value="P:translation"/>
    <property type="evidence" value="ECO:0007669"/>
    <property type="project" value="UniProtKB-UniRule"/>
</dbReference>
<dbReference type="CDD" id="cd00337">
    <property type="entry name" value="Ribosomal_uL14"/>
    <property type="match status" value="1"/>
</dbReference>
<dbReference type="FunFam" id="2.40.150.20:FF:000001">
    <property type="entry name" value="50S ribosomal protein L14"/>
    <property type="match status" value="1"/>
</dbReference>
<dbReference type="Gene3D" id="2.40.150.20">
    <property type="entry name" value="Ribosomal protein L14"/>
    <property type="match status" value="1"/>
</dbReference>
<dbReference type="HAMAP" id="MF_01367">
    <property type="entry name" value="Ribosomal_uL14"/>
    <property type="match status" value="1"/>
</dbReference>
<dbReference type="InterPro" id="IPR000218">
    <property type="entry name" value="Ribosomal_uL14"/>
</dbReference>
<dbReference type="InterPro" id="IPR005745">
    <property type="entry name" value="Ribosomal_uL14_bac-type"/>
</dbReference>
<dbReference type="InterPro" id="IPR036853">
    <property type="entry name" value="Ribosomal_uL14_sf"/>
</dbReference>
<dbReference type="NCBIfam" id="TIGR01067">
    <property type="entry name" value="rplN_bact"/>
    <property type="match status" value="1"/>
</dbReference>
<dbReference type="PANTHER" id="PTHR11761">
    <property type="entry name" value="50S/60S RIBOSOMAL PROTEIN L14/L23"/>
    <property type="match status" value="1"/>
</dbReference>
<dbReference type="PANTHER" id="PTHR11761:SF3">
    <property type="entry name" value="LARGE RIBOSOMAL SUBUNIT PROTEIN UL14M"/>
    <property type="match status" value="1"/>
</dbReference>
<dbReference type="Pfam" id="PF00238">
    <property type="entry name" value="Ribosomal_L14"/>
    <property type="match status" value="1"/>
</dbReference>
<dbReference type="SMART" id="SM01374">
    <property type="entry name" value="Ribosomal_L14"/>
    <property type="match status" value="1"/>
</dbReference>
<dbReference type="SUPFAM" id="SSF50193">
    <property type="entry name" value="Ribosomal protein L14"/>
    <property type="match status" value="1"/>
</dbReference>
<evidence type="ECO:0000255" key="1">
    <source>
        <dbReference type="HAMAP-Rule" id="MF_01367"/>
    </source>
</evidence>
<evidence type="ECO:0000305" key="2"/>
<name>RL14_SYNS3</name>
<proteinExistence type="inferred from homology"/>
<keyword id="KW-1185">Reference proteome</keyword>
<keyword id="KW-0687">Ribonucleoprotein</keyword>
<keyword id="KW-0689">Ribosomal protein</keyword>
<keyword id="KW-0694">RNA-binding</keyword>
<keyword id="KW-0699">rRNA-binding</keyword>
<comment type="function">
    <text evidence="1">Binds to 23S rRNA. Forms part of two intersubunit bridges in the 70S ribosome.</text>
</comment>
<comment type="subunit">
    <text evidence="1">Part of the 50S ribosomal subunit. Forms a cluster with proteins L3 and L19. In the 70S ribosome, L14 and L19 interact and together make contacts with the 16S rRNA in bridges B5 and B8.</text>
</comment>
<comment type="similarity">
    <text evidence="1">Belongs to the universal ribosomal protein uL14 family.</text>
</comment>
<sequence length="121" mass="13384">MIQQETFLTVADNSGAKRIQCIRVLGTNRRYAHVGDVIVATVKDAMPNMGVKKSDIVKAVVVRTKATMRRDTGNSIRFDDNAAVIINDDKNPKGTRVFGPVARELRERSFTKIVSLAPEVI</sequence>
<reference key="1">
    <citation type="journal article" date="2006" name="Proc. Natl. Acad. Sci. U.S.A.">
        <title>Genome sequence of Synechococcus CC9311: insights into adaptation to a coastal environment.</title>
        <authorList>
            <person name="Palenik B."/>
            <person name="Ren Q."/>
            <person name="Dupont C.L."/>
            <person name="Myers G.S."/>
            <person name="Heidelberg J.F."/>
            <person name="Badger J.H."/>
            <person name="Madupu R."/>
            <person name="Nelson W.C."/>
            <person name="Brinkac L.M."/>
            <person name="Dodson R.J."/>
            <person name="Durkin A.S."/>
            <person name="Daugherty S.C."/>
            <person name="Sullivan S.A."/>
            <person name="Khouri H."/>
            <person name="Mohamoud Y."/>
            <person name="Halpin R."/>
            <person name="Paulsen I.T."/>
        </authorList>
    </citation>
    <scope>NUCLEOTIDE SEQUENCE [LARGE SCALE GENOMIC DNA]</scope>
    <source>
        <strain>CC9311</strain>
    </source>
</reference>